<keyword id="KW-0002">3D-structure</keyword>
<keyword id="KW-0945">Host-virus interaction</keyword>
<keyword id="KW-1185">Reference proteome</keyword>
<keyword id="KW-1161">Viral attachment to host cell</keyword>
<keyword id="KW-0946">Virion</keyword>
<keyword id="KW-1160">Virus entry into host cell</keyword>
<accession>A0A385DTC5</accession>
<dbReference type="EMBL" id="MH675552">
    <property type="protein sequence ID" value="AXQ62664.1"/>
    <property type="molecule type" value="Genomic_DNA"/>
</dbReference>
<dbReference type="PDB" id="7QOF">
    <property type="method" value="EM"/>
    <property type="resolution" value="3.01 A"/>
    <property type="chains" value="l=1-97"/>
</dbReference>
<dbReference type="PDB" id="7QOH">
    <property type="method" value="EM"/>
    <property type="resolution" value="3.32 A"/>
    <property type="chains" value="i/j/k=1-97"/>
</dbReference>
<dbReference type="PDB" id="7QOI">
    <property type="method" value="EM"/>
    <property type="resolution" value="3.62 A"/>
    <property type="chains" value="Ai/Aj/Ak/Bi/Bj/Bk/Ci/Cj/Ck/Di/Dj/Dk/Ei/Ej/Ek=1-97"/>
</dbReference>
<dbReference type="PDB" id="8CKB">
    <property type="method" value="EM"/>
    <property type="resolution" value="4.39 A"/>
    <property type="chains" value="B001/B002/B003/B004/B005/B006/B007/B008/B009/B010/B011/B012/B013/B014/B015/B016/B017/B018/B019/B020/B021/B022/B023/B024/B025/B026/B027/B028/B029/B030=57-71"/>
</dbReference>
<dbReference type="PDBsum" id="7QOF"/>
<dbReference type="PDBsum" id="7QOH"/>
<dbReference type="PDBsum" id="7QOI"/>
<dbReference type="PDBsum" id="8CKB"/>
<dbReference type="EMDB" id="EMD-14088"/>
<dbReference type="EMDB" id="EMD-14090"/>
<dbReference type="EMDB" id="EMD-14091"/>
<dbReference type="SMR" id="A0A385DTC5"/>
<dbReference type="Proteomes" id="UP000262320">
    <property type="component" value="Genome"/>
</dbReference>
<dbReference type="GO" id="GO:0044423">
    <property type="term" value="C:virion component"/>
    <property type="evidence" value="ECO:0007669"/>
    <property type="project" value="UniProtKB-KW"/>
</dbReference>
<dbReference type="GO" id="GO:0046718">
    <property type="term" value="P:symbiont entry into host cell"/>
    <property type="evidence" value="ECO:0007669"/>
    <property type="project" value="UniProtKB-KW"/>
</dbReference>
<dbReference type="GO" id="GO:0019062">
    <property type="term" value="P:virion attachment to host cell"/>
    <property type="evidence" value="ECO:0007669"/>
    <property type="project" value="UniProtKB-KW"/>
</dbReference>
<dbReference type="Gene3D" id="6.10.140.1630">
    <property type="match status" value="1"/>
</dbReference>
<dbReference type="InterPro" id="IPR022741">
    <property type="entry name" value="Phage_B103_Gp8"/>
</dbReference>
<dbReference type="Pfam" id="PF11133">
    <property type="entry name" value="Phage_head_fibr"/>
    <property type="match status" value="1"/>
</dbReference>
<feature type="chain" id="PRO_0000458024" description="Head fiber trimeric protein">
    <location>
        <begin position="1"/>
        <end position="97"/>
    </location>
</feature>
<feature type="strand" evidence="7">
    <location>
        <begin position="2"/>
        <end position="4"/>
    </location>
</feature>
<feature type="strand" evidence="6">
    <location>
        <begin position="7"/>
        <end position="9"/>
    </location>
</feature>
<feature type="strand" evidence="6">
    <location>
        <begin position="18"/>
        <end position="21"/>
    </location>
</feature>
<feature type="strand" evidence="6">
    <location>
        <begin position="26"/>
        <end position="29"/>
    </location>
</feature>
<feature type="strand" evidence="6">
    <location>
        <begin position="31"/>
        <end position="36"/>
    </location>
</feature>
<organism>
    <name type="scientific">Bacteroides phage crAss001</name>
    <name type="common">Bacteroides phage PhiCrAss001</name>
    <dbReference type="NCBI Taxonomy" id="2301731"/>
    <lineage>
        <taxon>Viruses</taxon>
        <taxon>Duplodnaviria</taxon>
        <taxon>Heunggongvirae</taxon>
        <taxon>Uroviricota</taxon>
        <taxon>Caudoviricetes</taxon>
        <taxon>Crassvirales</taxon>
        <taxon>Steigviridae</taxon>
        <taxon>Asinivirinae</taxon>
        <taxon>Kehishuvirus</taxon>
        <taxon>Kehishuvirus primarius</taxon>
    </lineage>
</organism>
<organismHost>
    <name type="scientific">Bacteroides intestinalis</name>
    <dbReference type="NCBI Taxonomy" id="329854"/>
</organismHost>
<reference key="1">
    <citation type="journal article" date="2018" name="Nat. Commun.">
        <title>PhiCrAss001 represents the most abundant bacteriophage family in the human gut and infects Bacteroides intestinalis.</title>
        <authorList>
            <person name="Shkoporov A.N."/>
            <person name="Khokhlova E.V."/>
            <person name="Fitzgerald C.B."/>
            <person name="Stockdale S.R."/>
            <person name="Draper L.A."/>
            <person name="Ross R.P."/>
            <person name="Hill C."/>
        </authorList>
    </citation>
    <scope>NUCLEOTIDE SEQUENCE [LARGE SCALE GENOMIC DNA]</scope>
</reference>
<reference key="2">
    <citation type="journal article" date="2023" name="Nature">
        <title>Structural atlas of a human gut crassvirus.</title>
        <authorList>
            <person name="Bayfield O.W."/>
            <person name="Shkoporov A.N."/>
            <person name="Yutin N."/>
            <person name="Khokhlova E.V."/>
            <person name="Smith J.L.R."/>
            <person name="Hawkins D.E.D.P."/>
            <person name="Koonin E.V."/>
            <person name="Hill C."/>
            <person name="Antson A.A."/>
        </authorList>
    </citation>
    <scope>SUBCELLULAR LOCATION</scope>
    <scope>INTERACTION WITH THE MAJOR CAPSID PROTEIN</scope>
    <scope>SUBUNIT</scope>
    <scope>FUNCTION</scope>
</reference>
<proteinExistence type="evidence at protein level"/>
<evidence type="ECO:0000269" key="1">
    <source>
    </source>
</evidence>
<evidence type="ECO:0000303" key="2">
    <source>
    </source>
</evidence>
<evidence type="ECO:0000303" key="3">
    <source>
    </source>
</evidence>
<evidence type="ECO:0000305" key="4"/>
<evidence type="ECO:0000312" key="5">
    <source>
        <dbReference type="EMBL" id="AXQ62664.1"/>
    </source>
</evidence>
<evidence type="ECO:0007829" key="6">
    <source>
        <dbReference type="PDB" id="7QOF"/>
    </source>
</evidence>
<evidence type="ECO:0007829" key="7">
    <source>
        <dbReference type="PDB" id="7QOH"/>
    </source>
</evidence>
<name>HFT_BPCA1</name>
<sequence>MKTLRTLKISPNAPDINSVWLYKGTMKYFNNGEWETIGGESEPYVLPAATTSTIGGVKKATNVGNLATGAELATVVTKVNAILSALKVADIMVEDAN</sequence>
<gene>
    <name evidence="5" type="ORF">crAss001_21</name>
</gene>
<comment type="function">
    <text evidence="1">Forms short fibers at the surface of the viral capsid.</text>
</comment>
<comment type="subunit">
    <text evidence="1">Homotrimer (PubMed:37138077). Interacts with the major capsid protein (PubMed:37138077).</text>
</comment>
<comment type="subcellular location">
    <subcellularLocation>
        <location evidence="1">Virion</location>
    </subcellularLocation>
    <text evidence="1">Present in 75 copies in the virion.</text>
</comment>
<protein>
    <recommendedName>
        <fullName evidence="3">Head fiber trimeric protein</fullName>
    </recommendedName>
    <alternativeName>
        <fullName evidence="4">Capsid fiber trimeric protein</fullName>
    </alternativeName>
    <alternativeName>
        <fullName evidence="2">Gene product 21</fullName>
        <shortName evidence="2">gp21</shortName>
    </alternativeName>
</protein>